<keyword id="KW-0002">3D-structure</keyword>
<keyword id="KW-1064">Adaptive immunity</keyword>
<keyword id="KW-0025">Alternative splicing</keyword>
<keyword id="KW-0037">Angiogenesis</keyword>
<keyword id="KW-0067">ATP-binding</keyword>
<keyword id="KW-0130">Cell adhesion</keyword>
<keyword id="KW-1003">Cell membrane</keyword>
<keyword id="KW-0963">Cytoplasm</keyword>
<keyword id="KW-0333">Golgi apparatus</keyword>
<keyword id="KW-0391">Immunity</keyword>
<keyword id="KW-0418">Kinase</keyword>
<keyword id="KW-0460">Magnesium</keyword>
<keyword id="KW-0472">Membrane</keyword>
<keyword id="KW-0479">Metal-binding</keyword>
<keyword id="KW-0547">Nucleotide-binding</keyword>
<keyword id="KW-0539">Nucleus</keyword>
<keyword id="KW-0597">Phosphoprotein</keyword>
<keyword id="KW-1267">Proteomics identification</keyword>
<keyword id="KW-1185">Reference proteome</keyword>
<keyword id="KW-0677">Repeat</keyword>
<keyword id="KW-0723">Serine/threonine-protein kinase</keyword>
<keyword id="KW-0808">Transferase</keyword>
<keyword id="KW-0862">Zinc</keyword>
<keyword id="KW-0863">Zinc-finger</keyword>
<protein>
    <recommendedName>
        <fullName>Serine/threonine-protein kinase D2</fullName>
        <ecNumber evidence="9 10 17 23">2.7.11.13</ecNumber>
    </recommendedName>
    <alternativeName>
        <fullName>nPKC-D2</fullName>
    </alternativeName>
</protein>
<sequence length="878" mass="96722">MATAPSYPAGLPGSPGPGSPPPPGGLELQSPPPLLPQIPAPGSGVSFHIQIGLTREFVLLPAASELAHVKQLACSIVDQKFPECGFYGLYDKILLFKHDPTSANLLQLVRSSGDIQEGDLVEVVLSASATFEDFQIRPHALTVHSYRAPAFCDHCGEMLFGLVRQGLKCDGCGLNYHKRCAFSIPNNCSGARKRRLSSTSLASGHSVRLGTSESLPCTAEELSRSTTELLPRRPPSSSSSSSASSYTGRPIELDKMLLSKVKVPHTFLIHSYTRPTVCQACKKLLKGLFRQGLQCKDCKFNCHKRCATRVPNDCLGEALINGDVPMEEATDFSEADKSALMDESEDSGVIPGSHSENALHASEEEEGEGGKAQSSLGYIPLMRVVQSVRHTTRKSSTTLREGWVVHYSNKDTLRKRHYWRLDCKCITLFQNNTTNRYYKEIPLSEILTVESAQNFSLVPPGTNPHCFEIVTANATYFVGEMPGGTPGGPSGQGAEAARGWETAIRQALMPVILQDAPSAPGHAPHRQASLSISVSNSQIQENVDIATVYQIFPDEVLGSGQFGVVYGGKHRKTGRDVAVKVIDKLRFPTKQESQLRNEVAILQSLRHPGIVNLECMFETPEKVFVVMEKLHGDMLEMILSSEKGRLPERLTKFLITQILVALRHLHFKNIVHCDLKPENVLLASADPFPQVKLCDFGFARIIGEKSFRRSVVGTPAYLAPEVLLNQGYNRSLDMWSVGVIMYVSLSGTFPFNEDEDINDQIQNAAFMYPASPWSHISAGAIDLINNLLQVKMRKRYSVDKSLSHPWLQEYQTWLDLRELEGKMGERYITHESDDARWEQFAAEHPLPGSGLPTDRDLGGACPPQDHDMQGLAERISVL</sequence>
<comment type="function">
    <text evidence="3 11 12 13 14 16 17 19 20 21 22 23">Serine/threonine-protein kinase that converts transient diacylglycerol (DAG) signals into prolonged physiological effects downstream of PKC, and is involved in the regulation of cell proliferation via MAPK1/3 (ERK1/2) signaling, oxidative stress-induced NF-kappa-B activation, inhibition of HDAC7 transcriptional repression, signaling downstream of T-cell antigen receptor (TCR) and cytokine production, and plays a role in Golgi membrane trafficking, angiogenesis, secretory granule release and cell adhesion (PubMed:14743217, PubMed:15604256, PubMed:16928771, PubMed:17077180, PubMed:17951978, PubMed:17962809, PubMed:18262756, PubMed:19001381, PubMed:19192391, PubMed:23503467, PubMed:28428613). May potentiate mitogenesis induced by the neuropeptide bombesin by mediating an increase in the duration of MAPK1/3 (ERK1/2) signaling, which leads to accumulation of immediate-early gene products including FOS that stimulate cell cycle progression (By similarity). In response to oxidative stress, is phosphorylated at Tyr-438 and Tyr-717 by ABL1, which leads to the activation of PRKD2 without increasing its catalytic activity, and mediates activation of NF-kappa-B (PubMed:15604256, PubMed:28428613). In response to the activation of the gastrin receptor CCKBR, is phosphorylated at Ser-244 by CSNK1D and CSNK1E, translocates to the nucleus, phosphorylates HDAC7, leading to nuclear export of HDAC7 and inhibition of HDAC7 transcriptional repression of NR4A1/NUR77 (PubMed:17962809). Upon TCR stimulation, is activated independently of ZAP70, translocates from the cytoplasm to the nucleus and is required for interleukin-2 (IL2) promoter up-regulation (PubMed:17077180). During adaptive immune responses, is required in peripheral T-lymphocytes for the production of the effector cytokines IL2 and IFNG after TCR engagement and for optimal induction of antibody responses to antigens (By similarity). In epithelial cells stimulated with lysophosphatidic acid (LPA), is activated through a PKC-dependent pathway and mediates LPA-stimulated interleukin-8 (IL8) secretion via a NF-kappa-B-dependent pathway (PubMed:16928771). During TCR-induced T-cell activation, interacts with and is activated by the tyrosine kinase LCK, which results in the activation of the NFAT transcription factors (PubMed:19192391). In the trans-Golgi network (TGN), regulates the fission of transport vesicles that are on their way to the plasma membrane and in polarized cells is involved in the transport of proteins from the TGN to the basolateral membrane (PubMed:14743217). Plays an important role in endothelial cell proliferation and migration prior to angiogenesis, partly through modulation of the expression of KDR/VEGFR2 and FGFR1, two key growth factor receptors involved in angiogenesis (PubMed:19001381). In secretory pathway, is required for the release of chromogranin-A (CHGA)-containing secretory granules from the TGN (PubMed:18262756). Downstream of PRKCA, plays important roles in angiotensin-2-induced monocyte adhesion to endothelial cells (PubMed:17951978). Plays a regulatory role in angiogenesis and tumor growth by phosphorylating a downstream mediator CIB1 isoform 2, resulting in vascular endothelial growth factor A (VEGFA) secretion (PubMed:23503467).</text>
</comment>
<comment type="catalytic activity">
    <reaction evidence="9 10 17 23">
        <text>L-seryl-[protein] + ATP = O-phospho-L-seryl-[protein] + ADP + H(+)</text>
        <dbReference type="Rhea" id="RHEA:17989"/>
        <dbReference type="Rhea" id="RHEA-COMP:9863"/>
        <dbReference type="Rhea" id="RHEA-COMP:11604"/>
        <dbReference type="ChEBI" id="CHEBI:15378"/>
        <dbReference type="ChEBI" id="CHEBI:29999"/>
        <dbReference type="ChEBI" id="CHEBI:30616"/>
        <dbReference type="ChEBI" id="CHEBI:83421"/>
        <dbReference type="ChEBI" id="CHEBI:456216"/>
        <dbReference type="EC" id="2.7.11.13"/>
    </reaction>
</comment>
<comment type="catalytic activity">
    <reaction evidence="9 10 17 23">
        <text>L-threonyl-[protein] + ATP = O-phospho-L-threonyl-[protein] + ADP + H(+)</text>
        <dbReference type="Rhea" id="RHEA:46608"/>
        <dbReference type="Rhea" id="RHEA-COMP:11060"/>
        <dbReference type="Rhea" id="RHEA-COMP:11605"/>
        <dbReference type="ChEBI" id="CHEBI:15378"/>
        <dbReference type="ChEBI" id="CHEBI:30013"/>
        <dbReference type="ChEBI" id="CHEBI:30616"/>
        <dbReference type="ChEBI" id="CHEBI:61977"/>
        <dbReference type="ChEBI" id="CHEBI:456216"/>
        <dbReference type="EC" id="2.7.11.13"/>
    </reaction>
</comment>
<comment type="cofactor">
    <cofactor evidence="9 10 23">
        <name>Mg(2+)</name>
        <dbReference type="ChEBI" id="CHEBI:18420"/>
    </cofactor>
</comment>
<comment type="activity regulation">
    <text evidence="10 17 23">Activated by DAG and phorbol esters (PubMed:12058027, PubMed:17962809, PubMed:28428613). Phorbol-ester/DAG-type domains bind DAG, mediating translocation to membranes (PubMed:17962809). Autophosphorylation of Ser-710 and phosphorylation of Ser-706 by PKC relieves auto-inhibition by the PH domain (PubMed:17962809). Catalytic activity is further increased by phosphorylation at Tyr-717 in response to oxidative stress (PubMed:28428613).</text>
</comment>
<comment type="subunit">
    <text evidence="21 22 23">Interacts (via C-terminus) with LCK (PubMed:19192391). Interacts (via N-terminal AP-rich region) with CIB1 isoform 2 (PubMed:23503467). Interacts (via N-terminus and zing-finger domain 1 and 2) with PRKCD in response to oxidative stress; the interaction is independent of PRKD2 tyrosine phosphorylation (PubMed:28428613).</text>
</comment>
<comment type="interaction">
    <interactant intactId="EBI-1384325">
        <id>Q9BZL6</id>
    </interactant>
    <interactant intactId="EBI-1048378">
        <id>Q8WUI4</id>
        <label>HDAC7</label>
    </interactant>
    <organismsDiffer>false</organismsDiffer>
    <experiments>6</experiments>
</comment>
<comment type="interaction">
    <interactant intactId="EBI-1384325">
        <id>Q9BZL6</id>
    </interactant>
    <interactant intactId="EBI-306940">
        <id>Q04917</id>
        <label>YWHAH</label>
    </interactant>
    <organismsDiffer>false</organismsDiffer>
    <experiments>3</experiments>
</comment>
<comment type="subcellular location">
    <subcellularLocation>
        <location evidence="17">Cytoplasm</location>
    </subcellularLocation>
    <subcellularLocation>
        <location evidence="2">Cell membrane</location>
    </subcellularLocation>
    <subcellularLocation>
        <location evidence="17">Nucleus</location>
    </subcellularLocation>
    <subcellularLocation>
        <location evidence="19">Golgi apparatus</location>
        <location evidence="19">trans-Golgi network</location>
    </subcellularLocation>
    <text evidence="17">Translocation to the cell membrane is required for kinase activation. Accumulates in the nucleus upon CK1-mediated phosphorylation after activation of G-protein-coupled receptors. Nuclear accumulation is regulated by blocking nuclear export of active PRKD2 rather than by increasing import.</text>
</comment>
<comment type="alternative products">
    <event type="alternative splicing"/>
    <isoform>
        <id>Q9BZL6-1</id>
        <name>1</name>
        <sequence type="displayed"/>
    </isoform>
    <isoform>
        <id>Q9BZL6-2</id>
        <name>2</name>
        <sequence type="described" ref="VSP_057279"/>
    </isoform>
    <isoform>
        <id>Q9BZL6-3</id>
        <name>3</name>
        <sequence type="described" ref="VSP_059398"/>
    </isoform>
</comment>
<comment type="tissue specificity">
    <text evidence="9">Widely expressed.</text>
</comment>
<comment type="PTM">
    <text evidence="9 10 12 17 23">Phosphorylation of Ser-876 correlates with the activation status of the kinase (PubMed:11062248). Ser-706 or/and Ser-710 are probably phosphorylated by PKC (PubMed:12058027, PubMed:28428613). Phosphorylation at Ser-244 by CSNK1D and CSNK1E promotes nuclear localization and substrate targeting (PubMed:17962809). Phosphorylation at Ser-244, Ser-706 and Ser-710 is required for nuclear localization (PubMed:17962809). Phosphorylated at Tyr-438 by ABL1 in response to oxidative stress (PubMed:15604256). Phosphorylated at Tyr-717 by ABL1 specifically in response to oxidative stress; requires prior phosphorylation at Ser-706 or/and Ser-710 (PubMed:28428613).</text>
</comment>
<comment type="similarity">
    <text evidence="25">Belongs to the protein kinase superfamily. CAMK Ser/Thr protein kinase family. PKD subfamily.</text>
</comment>
<comment type="sequence caution" evidence="25">
    <conflict type="frameshift">
        <sequence resource="EMBL-CDS" id="AAF36107"/>
    </conflict>
</comment>
<proteinExistence type="evidence at protein level"/>
<reference key="1">
    <citation type="journal article" date="2001" name="J. Biol. Chem.">
        <title>Molecular cloning and characterization of the human protein kinase D2. A novel member of the protein kinase d family of serine threonine kinases.</title>
        <authorList>
            <person name="Sturany S."/>
            <person name="Van Lint J."/>
            <person name="Mueller F."/>
            <person name="Wilda M."/>
            <person name="Hameister H."/>
            <person name="Hoecker M."/>
            <person name="Brey A."/>
            <person name="Gern U."/>
            <person name="Vandenheede J."/>
            <person name="Gress T."/>
            <person name="Adler G."/>
            <person name="Seufferlein T."/>
        </authorList>
    </citation>
    <scope>NUCLEOTIDE SEQUENCE [MRNA] (ISOFORM 1)</scope>
    <scope>CATALYTIC ACTIVITY</scope>
    <scope>COFACTOR</scope>
    <scope>TISSUE SPECIFICITY</scope>
    <scope>PHOSPHORYLATION AT SER-876</scope>
    <source>
        <tissue>Pancreas</tissue>
    </source>
</reference>
<reference key="2">
    <citation type="journal article" date="2004" name="Nat. Genet.">
        <title>Complete sequencing and characterization of 21,243 full-length human cDNAs.</title>
        <authorList>
            <person name="Ota T."/>
            <person name="Suzuki Y."/>
            <person name="Nishikawa T."/>
            <person name="Otsuki T."/>
            <person name="Sugiyama T."/>
            <person name="Irie R."/>
            <person name="Wakamatsu A."/>
            <person name="Hayashi K."/>
            <person name="Sato H."/>
            <person name="Nagai K."/>
            <person name="Kimura K."/>
            <person name="Makita H."/>
            <person name="Sekine M."/>
            <person name="Obayashi M."/>
            <person name="Nishi T."/>
            <person name="Shibahara T."/>
            <person name="Tanaka T."/>
            <person name="Ishii S."/>
            <person name="Yamamoto J."/>
            <person name="Saito K."/>
            <person name="Kawai Y."/>
            <person name="Isono Y."/>
            <person name="Nakamura Y."/>
            <person name="Nagahari K."/>
            <person name="Murakami K."/>
            <person name="Yasuda T."/>
            <person name="Iwayanagi T."/>
            <person name="Wagatsuma M."/>
            <person name="Shiratori A."/>
            <person name="Sudo H."/>
            <person name="Hosoiri T."/>
            <person name="Kaku Y."/>
            <person name="Kodaira H."/>
            <person name="Kondo H."/>
            <person name="Sugawara M."/>
            <person name="Takahashi M."/>
            <person name="Kanda K."/>
            <person name="Yokoi T."/>
            <person name="Furuya T."/>
            <person name="Kikkawa E."/>
            <person name="Omura Y."/>
            <person name="Abe K."/>
            <person name="Kamihara K."/>
            <person name="Katsuta N."/>
            <person name="Sato K."/>
            <person name="Tanikawa M."/>
            <person name="Yamazaki M."/>
            <person name="Ninomiya K."/>
            <person name="Ishibashi T."/>
            <person name="Yamashita H."/>
            <person name="Murakawa K."/>
            <person name="Fujimori K."/>
            <person name="Tanai H."/>
            <person name="Kimata M."/>
            <person name="Watanabe M."/>
            <person name="Hiraoka S."/>
            <person name="Chiba Y."/>
            <person name="Ishida S."/>
            <person name="Ono Y."/>
            <person name="Takiguchi S."/>
            <person name="Watanabe S."/>
            <person name="Yosida M."/>
            <person name="Hotuta T."/>
            <person name="Kusano J."/>
            <person name="Kanehori K."/>
            <person name="Takahashi-Fujii A."/>
            <person name="Hara H."/>
            <person name="Tanase T.-O."/>
            <person name="Nomura Y."/>
            <person name="Togiya S."/>
            <person name="Komai F."/>
            <person name="Hara R."/>
            <person name="Takeuchi K."/>
            <person name="Arita M."/>
            <person name="Imose N."/>
            <person name="Musashino K."/>
            <person name="Yuuki H."/>
            <person name="Oshima A."/>
            <person name="Sasaki N."/>
            <person name="Aotsuka S."/>
            <person name="Yoshikawa Y."/>
            <person name="Matsunawa H."/>
            <person name="Ichihara T."/>
            <person name="Shiohata N."/>
            <person name="Sano S."/>
            <person name="Moriya S."/>
            <person name="Momiyama H."/>
            <person name="Satoh N."/>
            <person name="Takami S."/>
            <person name="Terashima Y."/>
            <person name="Suzuki O."/>
            <person name="Nakagawa S."/>
            <person name="Senoh A."/>
            <person name="Mizoguchi H."/>
            <person name="Goto Y."/>
            <person name="Shimizu F."/>
            <person name="Wakebe H."/>
            <person name="Hishigaki H."/>
            <person name="Watanabe T."/>
            <person name="Sugiyama A."/>
            <person name="Takemoto M."/>
            <person name="Kawakami B."/>
            <person name="Yamazaki M."/>
            <person name="Watanabe K."/>
            <person name="Kumagai A."/>
            <person name="Itakura S."/>
            <person name="Fukuzumi Y."/>
            <person name="Fujimori Y."/>
            <person name="Komiyama M."/>
            <person name="Tashiro H."/>
            <person name="Tanigami A."/>
            <person name="Fujiwara T."/>
            <person name="Ono T."/>
            <person name="Yamada K."/>
            <person name="Fujii Y."/>
            <person name="Ozaki K."/>
            <person name="Hirao M."/>
            <person name="Ohmori Y."/>
            <person name="Kawabata A."/>
            <person name="Hikiji T."/>
            <person name="Kobatake N."/>
            <person name="Inagaki H."/>
            <person name="Ikema Y."/>
            <person name="Okamoto S."/>
            <person name="Okitani R."/>
            <person name="Kawakami T."/>
            <person name="Noguchi S."/>
            <person name="Itoh T."/>
            <person name="Shigeta K."/>
            <person name="Senba T."/>
            <person name="Matsumura K."/>
            <person name="Nakajima Y."/>
            <person name="Mizuno T."/>
            <person name="Morinaga M."/>
            <person name="Sasaki M."/>
            <person name="Togashi T."/>
            <person name="Oyama M."/>
            <person name="Hata H."/>
            <person name="Watanabe M."/>
            <person name="Komatsu T."/>
            <person name="Mizushima-Sugano J."/>
            <person name="Satoh T."/>
            <person name="Shirai Y."/>
            <person name="Takahashi Y."/>
            <person name="Nakagawa K."/>
            <person name="Okumura K."/>
            <person name="Nagase T."/>
            <person name="Nomura N."/>
            <person name="Kikuchi H."/>
            <person name="Masuho Y."/>
            <person name="Yamashita R."/>
            <person name="Nakai K."/>
            <person name="Yada T."/>
            <person name="Nakamura Y."/>
            <person name="Ohara O."/>
            <person name="Isogai T."/>
            <person name="Sugano S."/>
        </authorList>
    </citation>
    <scope>NUCLEOTIDE SEQUENCE [LARGE SCALE MRNA] (ISOFORMS 2 AND 3)</scope>
    <source>
        <tissue>Mammary gland</tissue>
        <tissue>Placenta</tissue>
    </source>
</reference>
<reference key="3">
    <citation type="journal article" date="2004" name="Nature">
        <title>The DNA sequence and biology of human chromosome 19.</title>
        <authorList>
            <person name="Grimwood J."/>
            <person name="Gordon L.A."/>
            <person name="Olsen A.S."/>
            <person name="Terry A."/>
            <person name="Schmutz J."/>
            <person name="Lamerdin J.E."/>
            <person name="Hellsten U."/>
            <person name="Goodstein D."/>
            <person name="Couronne O."/>
            <person name="Tran-Gyamfi M."/>
            <person name="Aerts A."/>
            <person name="Altherr M."/>
            <person name="Ashworth L."/>
            <person name="Bajorek E."/>
            <person name="Black S."/>
            <person name="Branscomb E."/>
            <person name="Caenepeel S."/>
            <person name="Carrano A.V."/>
            <person name="Caoile C."/>
            <person name="Chan Y.M."/>
            <person name="Christensen M."/>
            <person name="Cleland C.A."/>
            <person name="Copeland A."/>
            <person name="Dalin E."/>
            <person name="Dehal P."/>
            <person name="Denys M."/>
            <person name="Detter J.C."/>
            <person name="Escobar J."/>
            <person name="Flowers D."/>
            <person name="Fotopulos D."/>
            <person name="Garcia C."/>
            <person name="Georgescu A.M."/>
            <person name="Glavina T."/>
            <person name="Gomez M."/>
            <person name="Gonzales E."/>
            <person name="Groza M."/>
            <person name="Hammon N."/>
            <person name="Hawkins T."/>
            <person name="Haydu L."/>
            <person name="Ho I."/>
            <person name="Huang W."/>
            <person name="Israni S."/>
            <person name="Jett J."/>
            <person name="Kadner K."/>
            <person name="Kimball H."/>
            <person name="Kobayashi A."/>
            <person name="Larionov V."/>
            <person name="Leem S.-H."/>
            <person name="Lopez F."/>
            <person name="Lou Y."/>
            <person name="Lowry S."/>
            <person name="Malfatti S."/>
            <person name="Martinez D."/>
            <person name="McCready P.M."/>
            <person name="Medina C."/>
            <person name="Morgan J."/>
            <person name="Nelson K."/>
            <person name="Nolan M."/>
            <person name="Ovcharenko I."/>
            <person name="Pitluck S."/>
            <person name="Pollard M."/>
            <person name="Popkie A.P."/>
            <person name="Predki P."/>
            <person name="Quan G."/>
            <person name="Ramirez L."/>
            <person name="Rash S."/>
            <person name="Retterer J."/>
            <person name="Rodriguez A."/>
            <person name="Rogers S."/>
            <person name="Salamov A."/>
            <person name="Salazar A."/>
            <person name="She X."/>
            <person name="Smith D."/>
            <person name="Slezak T."/>
            <person name="Solovyev V."/>
            <person name="Thayer N."/>
            <person name="Tice H."/>
            <person name="Tsai M."/>
            <person name="Ustaszewska A."/>
            <person name="Vo N."/>
            <person name="Wagner M."/>
            <person name="Wheeler J."/>
            <person name="Wu K."/>
            <person name="Xie G."/>
            <person name="Yang J."/>
            <person name="Dubchak I."/>
            <person name="Furey T.S."/>
            <person name="DeJong P."/>
            <person name="Dickson M."/>
            <person name="Gordon D."/>
            <person name="Eichler E.E."/>
            <person name="Pennacchio L.A."/>
            <person name="Richardson P."/>
            <person name="Stubbs L."/>
            <person name="Rokhsar D.S."/>
            <person name="Myers R.M."/>
            <person name="Rubin E.M."/>
            <person name="Lucas S.M."/>
        </authorList>
    </citation>
    <scope>NUCLEOTIDE SEQUENCE [LARGE SCALE GENOMIC DNA]</scope>
</reference>
<reference key="4">
    <citation type="journal article" date="2007" name="BMC Genomics">
        <title>The full-ORF clone resource of the German cDNA consortium.</title>
        <authorList>
            <person name="Bechtel S."/>
            <person name="Rosenfelder H."/>
            <person name="Duda A."/>
            <person name="Schmidt C.P."/>
            <person name="Ernst U."/>
            <person name="Wellenreuther R."/>
            <person name="Mehrle A."/>
            <person name="Schuster C."/>
            <person name="Bahr A."/>
            <person name="Bloecker H."/>
            <person name="Heubner D."/>
            <person name="Hoerlein A."/>
            <person name="Michel G."/>
            <person name="Wedler H."/>
            <person name="Koehrer K."/>
            <person name="Ottenwaelder B."/>
            <person name="Poustka A."/>
            <person name="Wiemann S."/>
            <person name="Schupp I."/>
        </authorList>
    </citation>
    <scope>NUCLEOTIDE SEQUENCE [LARGE SCALE MRNA] OF 337-878 (ISOFORM 1/2)</scope>
    <source>
        <tissue>Uterus</tissue>
    </source>
</reference>
<reference key="5">
    <citation type="journal article" date="2000" name="Genome Res.">
        <title>Cloning and functional analysis of cDNAs with open reading frames for 300 previously undefined genes expressed in CD34+ hematopoietic stem/progenitor cells.</title>
        <authorList>
            <person name="Zhang Q.-H."/>
            <person name="Ye M."/>
            <person name="Wu X.-Y."/>
            <person name="Ren S.-X."/>
            <person name="Zhao M."/>
            <person name="Zhao C.-J."/>
            <person name="Fu G."/>
            <person name="Shen Y."/>
            <person name="Fan H.-Y."/>
            <person name="Lu G."/>
            <person name="Zhong M."/>
            <person name="Xu X.-R."/>
            <person name="Han Z.-G."/>
            <person name="Zhang J.-W."/>
            <person name="Tao J."/>
            <person name="Huang Q.-H."/>
            <person name="Zhou J."/>
            <person name="Hu G.-X."/>
            <person name="Gu J."/>
            <person name="Chen S.-J."/>
            <person name="Chen Z."/>
        </authorList>
    </citation>
    <scope>NUCLEOTIDE SEQUENCE [LARGE SCALE MRNA] OF 574-878 (ISOFORM 1/2)</scope>
    <source>
        <tissue>Umbilical cord blood</tissue>
    </source>
</reference>
<reference key="6">
    <citation type="journal article" date="2002" name="J. Biol. Chem.">
        <title>Mechanism of activation of protein kinase D2(PKD2) by the CCK(B)/gastrin receptor.</title>
        <authorList>
            <person name="Sturany S."/>
            <person name="Van Lint J."/>
            <person name="Gilchrist A."/>
            <person name="Vandenheede J.R."/>
            <person name="Adler G."/>
            <person name="Seufferlein T."/>
        </authorList>
    </citation>
    <scope>CATALYTIC ACTIVITY</scope>
    <scope>COFACTOR</scope>
    <scope>ACTIVITY REGULATION</scope>
    <scope>PHOSPHORYLATION AT SER-706; SER-710 AND SER-876</scope>
</reference>
<reference key="7">
    <citation type="journal article" date="2004" name="Cancer Res.">
        <title>Protein kinase D2 mediates activation of nuclear factor kappaB by Bcr-Abl in Bcr-Abl+ human myeloid leukemia cells.</title>
        <authorList>
            <person name="Mihailovic T."/>
            <person name="Marx M."/>
            <person name="Auer A."/>
            <person name="Van Lint J."/>
            <person name="Schmid M."/>
            <person name="Weber C."/>
            <person name="Seufferlein T."/>
        </authorList>
    </citation>
    <scope>FUNCTION IN NF-KAPPA-B ACTIVATION</scope>
    <scope>PHOSPHORYLATION AT TYR-438</scope>
    <scope>MUTAGENESIS OF TYR-438</scope>
</reference>
<reference key="8">
    <citation type="journal article" date="2004" name="Nat. Cell Biol.">
        <title>Protein kinase D regulates basolateral membrane protein exit from trans-Golgi network.</title>
        <authorList>
            <person name="Yeaman C."/>
            <person name="Ayala M.I."/>
            <person name="Wright J.R."/>
            <person name="Bard F."/>
            <person name="Bossard C."/>
            <person name="Ang A."/>
            <person name="Maeda Y."/>
            <person name="Seufferlein T."/>
            <person name="Mellman I."/>
            <person name="Nelson W.J."/>
            <person name="Malhotra V."/>
        </authorList>
    </citation>
    <scope>FUNCTION IN TRAFFICKING</scope>
</reference>
<reference key="9">
    <citation type="journal article" date="2006" name="Int. Immunol.">
        <title>Protein kinase D2 contributes to either IL-2 promoter regulation or induction of cell death upon TCR stimulation depending on its activity in Jurkat cells.</title>
        <authorList>
            <person name="Irie A."/>
            <person name="Harada K."/>
            <person name="Tsukamoto H."/>
            <person name="Kim J.R."/>
            <person name="Araki N."/>
            <person name="Nishimura Y."/>
        </authorList>
    </citation>
    <scope>FUNCTION IN ADAPTIVE IMMUNE RESPONSE</scope>
</reference>
<reference key="10">
    <citation type="journal article" date="2007" name="Am. J. Physiol.">
        <title>Protein kinase D2 mediates lysophosphatidic acid-induced interleukin 8 production in nontransformed human colonic epithelial cells through NF-kappaB.</title>
        <authorList>
            <person name="Chiu T.T."/>
            <person name="Leung W.Y."/>
            <person name="Moyer M.P."/>
            <person name="Strieter R.M."/>
            <person name="Rozengurt E."/>
        </authorList>
    </citation>
    <scope>FUNCTION</scope>
</reference>
<reference key="11">
    <citation type="journal article" date="2007" name="EMBO J.">
        <title>Phosphorylation at Ser244 by CK1 determines nuclear localization and substrate targeting of PKD2.</title>
        <authorList>
            <person name="von Blume J."/>
            <person name="Knippschild U."/>
            <person name="Dequiedt F."/>
            <person name="Giamas G."/>
            <person name="Beck A."/>
            <person name="Auer A."/>
            <person name="Van Lint J."/>
            <person name="Adler G."/>
            <person name="Seufferlein T."/>
        </authorList>
    </citation>
    <scope>FUNCTION IN PHOSPHORYLATION OF HDAC7</scope>
    <scope>CATALYTIC ACTIVITY</scope>
    <scope>ACTIVITY REGULATION</scope>
    <scope>SUBCELLULAR LOCATION</scope>
    <scope>PHOSPHORYLATION AT SER-244</scope>
</reference>
<reference key="12">
    <citation type="journal article" date="2007" name="J. Pharmacol. Sci.">
        <title>Angiotensin II directly triggers endothelial exocytosis via protein kinase C-dependent protein kinase D2 activation.</title>
        <authorList>
            <person name="Ge X."/>
            <person name="Low B."/>
            <person name="Liang M."/>
            <person name="Fu J."/>
        </authorList>
    </citation>
    <scope>FUNCTION IN CELL ADHESION</scope>
</reference>
<reference key="13">
    <citation type="journal article" date="2008" name="Biochem. J.">
        <title>Selective binding of phorbol esters and diacylglycerol by individual C1 domains of the PKD family.</title>
        <authorList>
            <person name="Chen J."/>
            <person name="Deng F."/>
            <person name="Li J."/>
            <person name="Wang Q.J."/>
        </authorList>
    </citation>
    <scope>PHORBOL-ESTER BINDING</scope>
    <scope>MUTAGENESIS OF PRO-275</scope>
</reference>
<reference key="14">
    <citation type="journal article" date="2008" name="Cell. Signal.">
        <title>Protein kinase D2 regulates chromogranin A secretion in human BON neuroendocrine tumour cells.</title>
        <authorList>
            <person name="von Wichert G."/>
            <person name="Edenfeld T."/>
            <person name="von Blume J."/>
            <person name="Krisp H."/>
            <person name="Krndija D."/>
            <person name="Schmid H."/>
            <person name="Oswald F."/>
            <person name="Lother U."/>
            <person name="Walther P."/>
            <person name="Adler G."/>
            <person name="Seufferlein T."/>
        </authorList>
    </citation>
    <scope>FUNCTION IN SECRETORY PATHWAY</scope>
    <scope>SUBCELLULAR LOCATION</scope>
</reference>
<reference key="15">
    <citation type="journal article" date="2008" name="Mol. Cell">
        <title>Kinase-selective enrichment enables quantitative phosphoproteomics of the kinome across the cell cycle.</title>
        <authorList>
            <person name="Daub H."/>
            <person name="Olsen J.V."/>
            <person name="Bairlein M."/>
            <person name="Gnad F."/>
            <person name="Oppermann F.S."/>
            <person name="Korner R."/>
            <person name="Greff Z."/>
            <person name="Keri G."/>
            <person name="Stemmann O."/>
            <person name="Mann M."/>
        </authorList>
    </citation>
    <scope>PHOSPHORYLATION [LARGE SCALE ANALYSIS] AT SER-710 AND SER-876</scope>
    <scope>IDENTIFICATION BY MASS SPECTROMETRY [LARGE SCALE ANALYSIS]</scope>
    <source>
        <tissue>Cervix carcinoma</tissue>
    </source>
</reference>
<reference key="16">
    <citation type="journal article" date="2008" name="Proc. Natl. Acad. Sci. U.S.A.">
        <title>A quantitative atlas of mitotic phosphorylation.</title>
        <authorList>
            <person name="Dephoure N."/>
            <person name="Zhou C."/>
            <person name="Villen J."/>
            <person name="Beausoleil S.A."/>
            <person name="Bakalarski C.E."/>
            <person name="Elledge S.J."/>
            <person name="Gygi S.P."/>
        </authorList>
    </citation>
    <scope>PHOSPHORYLATION [LARGE SCALE ANALYSIS] AT SER-200; SER-203; SER-206; SER-214 AND SER-710</scope>
    <scope>IDENTIFICATION BY MASS SPECTROMETRY [LARGE SCALE ANALYSIS]</scope>
    <source>
        <tissue>Cervix carcinoma</tissue>
    </source>
</reference>
<reference key="17">
    <citation type="journal article" date="2009" name="Anal. Chem.">
        <title>Lys-N and trypsin cover complementary parts of the phosphoproteome in a refined SCX-based approach.</title>
        <authorList>
            <person name="Gauci S."/>
            <person name="Helbig A.O."/>
            <person name="Slijper M."/>
            <person name="Krijgsveld J."/>
            <person name="Heck A.J."/>
            <person name="Mohammed S."/>
        </authorList>
    </citation>
    <scope>IDENTIFICATION BY MASS SPECTROMETRY [LARGE SCALE ANALYSIS]</scope>
</reference>
<reference key="18">
    <citation type="journal article" date="2009" name="BMB Rep.">
        <title>PKD2 interacts with Lck and regulates NFAT activity in T cells.</title>
        <authorList>
            <person name="Li Q."/>
            <person name="Sun X."/>
            <person name="Wu J."/>
            <person name="Lin Z."/>
            <person name="Luo Y."/>
        </authorList>
    </citation>
    <scope>FUNCTION</scope>
    <scope>INTERACTION WITH LCK</scope>
</reference>
<reference key="19">
    <citation type="journal article" date="2009" name="J. Biol. Chem.">
        <title>Identification of protein kinase D2 as a pivotal regulator of endothelial cell proliferation, migration, and angiogenesis.</title>
        <authorList>
            <person name="Hao Q."/>
            <person name="Wang L."/>
            <person name="Zhao Z.J."/>
            <person name="Tang H."/>
        </authorList>
    </citation>
    <scope>FUNCTION IN ANGIOGENESIS</scope>
</reference>
<reference key="20">
    <citation type="journal article" date="2009" name="Mol. Cell. Proteomics">
        <title>Large-scale proteomics analysis of the human kinome.</title>
        <authorList>
            <person name="Oppermann F.S."/>
            <person name="Gnad F."/>
            <person name="Olsen J.V."/>
            <person name="Hornberger R."/>
            <person name="Greff Z."/>
            <person name="Keri G."/>
            <person name="Mann M."/>
            <person name="Daub H."/>
        </authorList>
    </citation>
    <scope>PHOSPHORYLATION [LARGE SCALE ANALYSIS] AT SER-206; SER-518; SER-710; TYR-717 AND SER-876</scope>
    <scope>IDENTIFICATION BY MASS SPECTROMETRY [LARGE SCALE ANALYSIS]</scope>
</reference>
<reference key="21">
    <citation type="journal article" date="2009" name="Sci. Signal.">
        <title>Quantitative phosphoproteomic analysis of T cell receptor signaling reveals system-wide modulation of protein-protein interactions.</title>
        <authorList>
            <person name="Mayya V."/>
            <person name="Lundgren D.H."/>
            <person name="Hwang S.-I."/>
            <person name="Rezaul K."/>
            <person name="Wu L."/>
            <person name="Eng J.K."/>
            <person name="Rodionov V."/>
            <person name="Han D.K."/>
        </authorList>
    </citation>
    <scope>IDENTIFICATION BY MASS SPECTROMETRY [LARGE SCALE ANALYSIS]</scope>
    <source>
        <tissue>Leukemic T-cell</tissue>
    </source>
</reference>
<reference key="22">
    <citation type="journal article" date="2010" name="Sci. Signal.">
        <title>Quantitative phosphoproteomics reveals widespread full phosphorylation site occupancy during mitosis.</title>
        <authorList>
            <person name="Olsen J.V."/>
            <person name="Vermeulen M."/>
            <person name="Santamaria A."/>
            <person name="Kumar C."/>
            <person name="Miller M.L."/>
            <person name="Jensen L.J."/>
            <person name="Gnad F."/>
            <person name="Cox J."/>
            <person name="Jensen T.S."/>
            <person name="Nigg E.A."/>
            <person name="Brunak S."/>
            <person name="Mann M."/>
        </authorList>
    </citation>
    <scope>IDENTIFICATION BY MASS SPECTROMETRY [LARGE SCALE ANALYSIS]</scope>
    <source>
        <tissue>Cervix carcinoma</tissue>
    </source>
</reference>
<reference key="23">
    <citation type="journal article" date="2011" name="BMC Syst. Biol.">
        <title>Initial characterization of the human central proteome.</title>
        <authorList>
            <person name="Burkard T.R."/>
            <person name="Planyavsky M."/>
            <person name="Kaupe I."/>
            <person name="Breitwieser F.P."/>
            <person name="Buerckstuemmer T."/>
            <person name="Bennett K.L."/>
            <person name="Superti-Furga G."/>
            <person name="Colinge J."/>
        </authorList>
    </citation>
    <scope>IDENTIFICATION BY MASS SPECTROMETRY [LARGE SCALE ANALYSIS]</scope>
</reference>
<reference key="24">
    <citation type="journal article" date="2011" name="Sci. Signal.">
        <title>System-wide temporal characterization of the proteome and phosphoproteome of human embryonic stem cell differentiation.</title>
        <authorList>
            <person name="Rigbolt K.T."/>
            <person name="Prokhorova T.A."/>
            <person name="Akimov V."/>
            <person name="Henningsen J."/>
            <person name="Johansen P.T."/>
            <person name="Kratchmarova I."/>
            <person name="Kassem M."/>
            <person name="Mann M."/>
            <person name="Olsen J.V."/>
            <person name="Blagoev B."/>
        </authorList>
    </citation>
    <scope>PHOSPHORYLATION [LARGE SCALE ANALYSIS] AT SER-203</scope>
    <scope>IDENTIFICATION BY MASS SPECTROMETRY [LARGE SCALE ANALYSIS]</scope>
</reference>
<reference key="25">
    <citation type="journal article" date="2013" name="J. Proteome Res.">
        <title>Toward a comprehensive characterization of a human cancer cell phosphoproteome.</title>
        <authorList>
            <person name="Zhou H."/>
            <person name="Di Palma S."/>
            <person name="Preisinger C."/>
            <person name="Peng M."/>
            <person name="Polat A.N."/>
            <person name="Heck A.J."/>
            <person name="Mohammed S."/>
        </authorList>
    </citation>
    <scope>PHOSPHORYLATION [LARGE SCALE ANALYSIS] AT SER-197; SER-198; SER-200; SER-203; SER-206 AND SER-710</scope>
    <scope>IDENTIFICATION BY MASS SPECTROMETRY [LARGE SCALE ANALYSIS]</scope>
    <source>
        <tissue>Cervix carcinoma</tissue>
        <tissue>Erythroleukemia</tissue>
    </source>
</reference>
<reference key="26">
    <citation type="journal article" date="2014" name="J. Proteomics">
        <title>An enzyme assisted RP-RPLC approach for in-depth analysis of human liver phosphoproteome.</title>
        <authorList>
            <person name="Bian Y."/>
            <person name="Song C."/>
            <person name="Cheng K."/>
            <person name="Dong M."/>
            <person name="Wang F."/>
            <person name="Huang J."/>
            <person name="Sun D."/>
            <person name="Wang L."/>
            <person name="Ye M."/>
            <person name="Zou H."/>
        </authorList>
    </citation>
    <scope>PHOSPHORYLATION [LARGE SCALE ANALYSIS] AT SER-214</scope>
    <scope>IDENTIFICATION BY MASS SPECTROMETRY [LARGE SCALE ANALYSIS]</scope>
    <source>
        <tissue>Liver</tissue>
    </source>
</reference>
<reference key="27">
    <citation type="journal article" date="2014" name="Oncogene">
        <title>A novel splice variant of calcium and integrin-binding protein 1 mediates protein kinase D2-stimulated tumour growth by regulating angiogenesis.</title>
        <authorList>
            <person name="Armacki M."/>
            <person name="Joodi G."/>
            <person name="Nimmagadda S.C."/>
            <person name="de Kimpe L."/>
            <person name="Pusapati G.V."/>
            <person name="Vandoninck S."/>
            <person name="Van Lint J."/>
            <person name="Illing A."/>
            <person name="Seufferlein T."/>
        </authorList>
    </citation>
    <scope>FUNCTION</scope>
    <scope>INTERACTION WITH CIB1 ISOFORM 2</scope>
    <scope>MUTAGENESIS OF SER-244; ASP-695; SER-706 AND SER-710</scope>
</reference>
<reference key="28">
    <citation type="journal article" date="2017" name="Sci. Rep.">
        <title>Differential regulation of PKD isoforms in oxidative stress conditions through phosphorylation of a conserved Tyr in the P+1 loop.</title>
        <authorList>
            <person name="Cobbaut M."/>
            <person name="Derua R."/>
            <person name="Doeppler H."/>
            <person name="Lou H.J."/>
            <person name="Vandoninck S."/>
            <person name="Storz P."/>
            <person name="Turk B.E."/>
            <person name="Seufferlein T."/>
            <person name="Waelkens E."/>
            <person name="Janssens V."/>
            <person name="Van Lint J."/>
        </authorList>
    </citation>
    <scope>FUNCTION</scope>
    <scope>CATALYTIC ACTIVITY</scope>
    <scope>COFACTOR</scope>
    <scope>ACTIVITY REGULATION</scope>
    <scope>INTERACTION WITH PRKCD</scope>
    <scope>MOTIF</scope>
    <scope>PHOSPHORYLATION AT SER-706; SER-710 AND TYR-717</scope>
    <scope>MUTAGENESIS OF TYR-87; TYR-438; SER-706; SER-710; TYR-717 AND 724-LEU--GLN-726</scope>
</reference>
<reference key="29">
    <citation type="submission" date="2005-11" db="PDB data bank">
        <title>Solution structure of the PH domain of protein kinase C, D2 type from human.</title>
        <authorList>
            <consortium name="RIKEN structural genomics initiative (RSGI)"/>
        </authorList>
    </citation>
    <scope>STRUCTURE BY NMR OF 395-509</scope>
</reference>
<reference key="30">
    <citation type="journal article" date="2008" name="Nat. Immunol.">
        <title>Phosphorylation-dependent interaction between antigenic peptides and MHC class I: a molecular basis for the presentation of transformed self.</title>
        <authorList>
            <person name="Mohammed F."/>
            <person name="Cobbold M."/>
            <person name="Zarling A.L."/>
            <person name="Salim M."/>
            <person name="Barrett-Wilt G.A."/>
            <person name="Shabanowitz J."/>
            <person name="Hunt D.F."/>
            <person name="Engelhard V.H."/>
            <person name="Willcox B.E."/>
        </authorList>
    </citation>
    <scope>X-RAY CRYSTALLOGRAPHY (1.60 ANGSTROMS) OF 526-534</scope>
</reference>
<reference key="31">
    <citation type="journal article" date="2007" name="Nature">
        <title>Patterns of somatic mutation in human cancer genomes.</title>
        <authorList>
            <person name="Greenman C."/>
            <person name="Stephens P."/>
            <person name="Smith R."/>
            <person name="Dalgliesh G.L."/>
            <person name="Hunter C."/>
            <person name="Bignell G."/>
            <person name="Davies H."/>
            <person name="Teague J."/>
            <person name="Butler A."/>
            <person name="Stevens C."/>
            <person name="Edkins S."/>
            <person name="O'Meara S."/>
            <person name="Vastrik I."/>
            <person name="Schmidt E.E."/>
            <person name="Avis T."/>
            <person name="Barthorpe S."/>
            <person name="Bhamra G."/>
            <person name="Buck G."/>
            <person name="Choudhury B."/>
            <person name="Clements J."/>
            <person name="Cole J."/>
            <person name="Dicks E."/>
            <person name="Forbes S."/>
            <person name="Gray K."/>
            <person name="Halliday K."/>
            <person name="Harrison R."/>
            <person name="Hills K."/>
            <person name="Hinton J."/>
            <person name="Jenkinson A."/>
            <person name="Jones D."/>
            <person name="Menzies A."/>
            <person name="Mironenko T."/>
            <person name="Perry J."/>
            <person name="Raine K."/>
            <person name="Richardson D."/>
            <person name="Shepherd R."/>
            <person name="Small A."/>
            <person name="Tofts C."/>
            <person name="Varian J."/>
            <person name="Webb T."/>
            <person name="West S."/>
            <person name="Widaa S."/>
            <person name="Yates A."/>
            <person name="Cahill D.P."/>
            <person name="Louis D.N."/>
            <person name="Goldstraw P."/>
            <person name="Nicholson A.G."/>
            <person name="Brasseur F."/>
            <person name="Looijenga L."/>
            <person name="Weber B.L."/>
            <person name="Chiew Y.-E."/>
            <person name="DeFazio A."/>
            <person name="Greaves M.F."/>
            <person name="Green A.R."/>
            <person name="Campbell P."/>
            <person name="Birney E."/>
            <person name="Easton D.F."/>
            <person name="Chenevix-Trench G."/>
            <person name="Tan M.-H."/>
            <person name="Khoo S.K."/>
            <person name="Teh B.T."/>
            <person name="Yuen S.T."/>
            <person name="Leung S.Y."/>
            <person name="Wooster R."/>
            <person name="Futreal P.A."/>
            <person name="Stratton M.R."/>
        </authorList>
    </citation>
    <scope>VARIANTS [LARGE SCALE ANALYSIS] MET-324; VAL-496; GLY-604; ARG-773; GLU-848 AND GLU-870</scope>
</reference>
<feature type="chain" id="PRO_0000055716" description="Serine/threonine-protein kinase D2">
    <location>
        <begin position="1"/>
        <end position="878"/>
    </location>
</feature>
<feature type="domain" description="PH" evidence="4">
    <location>
        <begin position="397"/>
        <end position="509"/>
    </location>
</feature>
<feature type="domain" description="Protein kinase" evidence="5">
    <location>
        <begin position="551"/>
        <end position="807"/>
    </location>
</feature>
<feature type="zinc finger region" description="Phorbol-ester/DAG-type 1" evidence="6">
    <location>
        <begin position="138"/>
        <end position="188"/>
    </location>
</feature>
<feature type="zinc finger region" description="Phorbol-ester/DAG-type 2" evidence="6">
    <location>
        <begin position="264"/>
        <end position="314"/>
    </location>
</feature>
<feature type="region of interest" description="Disordered" evidence="8">
    <location>
        <begin position="1"/>
        <end position="35"/>
    </location>
</feature>
<feature type="region of interest" description="Disordered" evidence="8">
    <location>
        <begin position="224"/>
        <end position="247"/>
    </location>
</feature>
<feature type="region of interest" description="Disordered" evidence="8">
    <location>
        <begin position="343"/>
        <end position="373"/>
    </location>
</feature>
<feature type="region of interest" description="Disordered" evidence="8">
    <location>
        <begin position="844"/>
        <end position="869"/>
    </location>
</feature>
<feature type="short sequence motif" description="Important for ABL1-mediated Tyr-717 phosphorylation" evidence="23">
    <location>
        <begin position="724"/>
        <end position="726"/>
    </location>
</feature>
<feature type="compositionally biased region" description="Low complexity" evidence="8">
    <location>
        <begin position="1"/>
        <end position="12"/>
    </location>
</feature>
<feature type="compositionally biased region" description="Pro residues" evidence="8">
    <location>
        <begin position="14"/>
        <end position="35"/>
    </location>
</feature>
<feature type="compositionally biased region" description="Low complexity" evidence="8">
    <location>
        <begin position="236"/>
        <end position="245"/>
    </location>
</feature>
<feature type="active site" description="Proton acceptor" evidence="5 7">
    <location>
        <position position="674"/>
    </location>
</feature>
<feature type="binding site" evidence="5">
    <location>
        <begin position="557"/>
        <end position="565"/>
    </location>
    <ligand>
        <name>ATP</name>
        <dbReference type="ChEBI" id="CHEBI:30616"/>
    </ligand>
</feature>
<feature type="binding site" evidence="5">
    <location>
        <position position="580"/>
    </location>
    <ligand>
        <name>ATP</name>
        <dbReference type="ChEBI" id="CHEBI:30616"/>
    </ligand>
</feature>
<feature type="modified residue" description="Phosphoserine" evidence="1">
    <location>
        <position position="30"/>
    </location>
</feature>
<feature type="modified residue" description="Phosphotyrosine" evidence="2">
    <location>
        <position position="87"/>
    </location>
</feature>
<feature type="modified residue" description="Phosphoserine" evidence="31">
    <location>
        <position position="197"/>
    </location>
</feature>
<feature type="modified residue" description="Phosphoserine" evidence="31">
    <location>
        <position position="198"/>
    </location>
</feature>
<feature type="modified residue" description="Phosphoserine" evidence="27 31">
    <location>
        <position position="200"/>
    </location>
</feature>
<feature type="modified residue" description="Phosphoserine" evidence="27 30 31">
    <location>
        <position position="203"/>
    </location>
</feature>
<feature type="modified residue" description="Phosphoserine" evidence="27 29 31">
    <location>
        <position position="206"/>
    </location>
</feature>
<feature type="modified residue" description="Phosphoserine" evidence="3">
    <location>
        <position position="212"/>
    </location>
</feature>
<feature type="modified residue" description="Phosphoserine" evidence="27 32">
    <location>
        <position position="214"/>
    </location>
</feature>
<feature type="modified residue" description="Phosphoserine; by CSNK1D and CSNK1E" evidence="17">
    <location>
        <position position="244"/>
    </location>
</feature>
<feature type="modified residue" description="Phosphotyrosine" evidence="2">
    <location>
        <position position="407"/>
    </location>
</feature>
<feature type="modified residue" description="Phosphotyrosine; by ABL1" evidence="12 26">
    <location>
        <position position="438"/>
    </location>
</feature>
<feature type="modified residue" description="Phosphoserine" evidence="29">
    <location>
        <position position="518"/>
    </location>
</feature>
<feature type="modified residue" description="Phosphoserine; by PKC" evidence="10 23">
    <location>
        <position position="706"/>
    </location>
</feature>
<feature type="modified residue" description="Phosphoserine" evidence="10 23 27 28 29 31">
    <location>
        <position position="710"/>
    </location>
</feature>
<feature type="modified residue" description="Phosphotyrosine; by ABL1" evidence="23 29">
    <location>
        <position position="717"/>
    </location>
</feature>
<feature type="modified residue" description="Phosphoserine; by autocatalysis" evidence="9 10 28 29">
    <location>
        <position position="876"/>
    </location>
</feature>
<feature type="splice variant" id="VSP_057279" description="In isoform 2." evidence="24">
    <location>
        <begin position="1"/>
        <end position="157"/>
    </location>
</feature>
<feature type="splice variant" id="VSP_059398" description="In isoform 3." evidence="24">
    <original>G</original>
    <variation>GGAWGPPTPWA</variation>
    <location>
        <position position="779"/>
    </location>
</feature>
<feature type="sequence variant" id="VAR_042330" description="In dbSNP:rs45455991." evidence="15">
    <original>V</original>
    <variation>M</variation>
    <location>
        <position position="324"/>
    </location>
</feature>
<feature type="sequence variant" id="VAR_042331" description="In dbSNP:rs55716765." evidence="15">
    <original>A</original>
    <variation>V</variation>
    <location>
        <position position="496"/>
    </location>
</feature>
<feature type="sequence variant" id="VAR_042332" description="In dbSNP:rs34325043." evidence="15">
    <original>S</original>
    <variation>G</variation>
    <location>
        <position position="604"/>
    </location>
</feature>
<feature type="sequence variant" id="VAR_042333" description="In dbSNP:rs55933311." evidence="15">
    <original>W</original>
    <variation>R</variation>
    <location>
        <position position="773"/>
    </location>
</feature>
<feature type="sequence variant" id="VAR_061531" description="In dbSNP:rs314665.">
    <original>A</original>
    <variation>V</variation>
    <location>
        <position position="835"/>
    </location>
</feature>
<feature type="sequence variant" id="VAR_042334" description="In a lung adenocarcinoma sample; somatic mutation." evidence="15">
    <original>G</original>
    <variation>E</variation>
    <location>
        <position position="848"/>
    </location>
</feature>
<feature type="sequence variant" id="VAR_042335" description="In a gastric adenocarcinoma sample; somatic mutation." evidence="15">
    <original>G</original>
    <variation>E</variation>
    <location>
        <position position="870"/>
    </location>
</feature>
<feature type="mutagenesis site" description="Loss of phosphorylation. No effect on the interaction with PRKCD. No effect on Ser-706 or/and Ser-710 phosphorylation." evidence="23">
    <original>Y</original>
    <variation>F</variation>
    <location>
        <position position="87"/>
    </location>
</feature>
<feature type="mutagenesis site" description="Constitutive kinase activity; when associated with E-706 and E-710." evidence="22">
    <original>S</original>
    <variation>E</variation>
    <location>
        <position position="244"/>
    </location>
</feature>
<feature type="mutagenesis site" description="Increase in ability to bind phorbol ester, slight increase in ability to bind DAG." evidence="18">
    <original>P</original>
    <variation>G</variation>
    <location>
        <position position="275"/>
    </location>
</feature>
<feature type="mutagenesis site" description="Slight increase in Tyr-717 phosphorylation. No effect on Ser-706 or/and Ser-710 phosphorylation. Increase in Tyr-717 phosphorylation; when associated with E-706 and E-710." evidence="23">
    <original>Y</original>
    <variation>D</variation>
    <location>
        <position position="438"/>
    </location>
</feature>
<feature type="mutagenesis site" description="Loss of phosphorylation. No effect on phosphorylation of Tyr-717 and on Ser-706 or/and Ser-710 phosphorylation." evidence="12 23">
    <original>Y</original>
    <variation>F</variation>
    <location>
        <position position="438"/>
    </location>
</feature>
<feature type="mutagenesis site" description="Loss of kinase activity." evidence="22">
    <original>D</original>
    <variation>A</variation>
    <location>
        <position position="695"/>
    </location>
</feature>
<feature type="mutagenesis site" description="Abolishes phosphorylation. Loss of Tyr-717 phosphorylation and any other tyrosine phosphorylation, and increases NF-kappa-B activation in response to oxidative stress; when associated with A-710." evidence="23">
    <original>S</original>
    <variation>A</variation>
    <location>
        <position position="706"/>
    </location>
</feature>
<feature type="mutagenesis site" description="Constitutive kinase activity; when associated with E-710 or with E-244 and E-710. Increases Tyr-717 phosphorylation; when associated with E-710 or with E-710 and D-438." evidence="22 23">
    <original>S</original>
    <variation>E</variation>
    <location>
        <position position="706"/>
    </location>
</feature>
<feature type="mutagenesis site" description="Abolishes phosphorylation. Loss of Tyr-717 phosphorylation and any other tyrosine phosphorylation, and increases NF-kappa-B activation in response to oxidative stress; when associated with A-706." evidence="23">
    <original>S</original>
    <variation>A</variation>
    <location>
        <position position="710"/>
    </location>
</feature>
<feature type="mutagenesis site" description="Constitutive kinase activity; when associated with E-706 or with E-244 and E-706. when associated with E-710 or with E-244 and E-710. Increases Tyr-717 phosphorylation; when associated with E-710 or with E-710 and D-438." evidence="22 23">
    <original>S</original>
    <variation>E</variation>
    <location>
        <position position="710"/>
    </location>
</feature>
<feature type="mutagenesis site" description="Abolishes phosphorylation. Decreases substrate affinity and increases catalytic efficiency. Increases Ser-706 or/and Ser-710 phosphorylation. Increases NF-kappa-B activation in response to oxidative stress." evidence="23">
    <original>Y</original>
    <variation>F</variation>
    <location>
        <position position="717"/>
    </location>
</feature>
<feature type="mutagenesis site" description="Reduced catalytic activity. Severe reduction in Tyr-717 phosphorylation by ABL1 in response to oxidative stress. No effect on Ser-706 or/and Ser-710 phosphorylation and on NF-kappa-B activation in response to oxidative stress." evidence="23">
    <original>LNQ</original>
    <variation>RNK</variation>
    <location>
        <begin position="724"/>
        <end position="726"/>
    </location>
</feature>
<feature type="sequence conflict" description="In Ref. 5; AAF36107." evidence="25" ref="5">
    <original>V</original>
    <variation>L</variation>
    <location>
        <position position="790"/>
    </location>
</feature>
<feature type="strand" evidence="33">
    <location>
        <begin position="399"/>
        <end position="406"/>
    </location>
</feature>
<feature type="strand" evidence="33">
    <location>
        <begin position="409"/>
        <end position="411"/>
    </location>
</feature>
<feature type="strand" evidence="33">
    <location>
        <begin position="415"/>
        <end position="421"/>
    </location>
</feature>
<feature type="strand" evidence="33">
    <location>
        <begin position="423"/>
        <end position="433"/>
    </location>
</feature>
<feature type="strand" evidence="33">
    <location>
        <begin position="438"/>
        <end position="442"/>
    </location>
</feature>
<feature type="turn" evidence="33">
    <location>
        <begin position="443"/>
        <end position="445"/>
    </location>
</feature>
<feature type="strand" evidence="33">
    <location>
        <begin position="448"/>
        <end position="452"/>
    </location>
</feature>
<feature type="strand" evidence="33">
    <location>
        <begin position="456"/>
        <end position="458"/>
    </location>
</feature>
<feature type="strand" evidence="33">
    <location>
        <begin position="465"/>
        <end position="470"/>
    </location>
</feature>
<feature type="strand" evidence="33">
    <location>
        <begin position="486"/>
        <end position="488"/>
    </location>
</feature>
<feature type="helix" evidence="33">
    <location>
        <begin position="495"/>
        <end position="507"/>
    </location>
</feature>
<name>KPCD2_HUMAN</name>
<accession>Q9BZL6</accession>
<accession>B4DTS2</accession>
<accession>M0QZW1</accession>
<accession>M0R2R2</accession>
<accession>Q8NCK8</accession>
<accession>Q8TB08</accession>
<accession>Q9P0T6</accession>
<accession>Q9Y3X8</accession>
<evidence type="ECO:0000250" key="1">
    <source>
        <dbReference type="UniProtKB" id="O94806"/>
    </source>
</evidence>
<evidence type="ECO:0000250" key="2">
    <source>
        <dbReference type="UniProtKB" id="Q15139"/>
    </source>
</evidence>
<evidence type="ECO:0000250" key="3">
    <source>
        <dbReference type="UniProtKB" id="Q8BZ03"/>
    </source>
</evidence>
<evidence type="ECO:0000255" key="4">
    <source>
        <dbReference type="PROSITE-ProRule" id="PRU00145"/>
    </source>
</evidence>
<evidence type="ECO:0000255" key="5">
    <source>
        <dbReference type="PROSITE-ProRule" id="PRU00159"/>
    </source>
</evidence>
<evidence type="ECO:0000255" key="6">
    <source>
        <dbReference type="PROSITE-ProRule" id="PRU00226"/>
    </source>
</evidence>
<evidence type="ECO:0000255" key="7">
    <source>
        <dbReference type="PROSITE-ProRule" id="PRU10027"/>
    </source>
</evidence>
<evidence type="ECO:0000256" key="8">
    <source>
        <dbReference type="SAM" id="MobiDB-lite"/>
    </source>
</evidence>
<evidence type="ECO:0000269" key="9">
    <source>
    </source>
</evidence>
<evidence type="ECO:0000269" key="10">
    <source>
    </source>
</evidence>
<evidence type="ECO:0000269" key="11">
    <source>
    </source>
</evidence>
<evidence type="ECO:0000269" key="12">
    <source>
    </source>
</evidence>
<evidence type="ECO:0000269" key="13">
    <source>
    </source>
</evidence>
<evidence type="ECO:0000269" key="14">
    <source>
    </source>
</evidence>
<evidence type="ECO:0000269" key="15">
    <source>
    </source>
</evidence>
<evidence type="ECO:0000269" key="16">
    <source>
    </source>
</evidence>
<evidence type="ECO:0000269" key="17">
    <source>
    </source>
</evidence>
<evidence type="ECO:0000269" key="18">
    <source>
    </source>
</evidence>
<evidence type="ECO:0000269" key="19">
    <source>
    </source>
</evidence>
<evidence type="ECO:0000269" key="20">
    <source>
    </source>
</evidence>
<evidence type="ECO:0000269" key="21">
    <source>
    </source>
</evidence>
<evidence type="ECO:0000269" key="22">
    <source>
    </source>
</evidence>
<evidence type="ECO:0000269" key="23">
    <source>
    </source>
</evidence>
<evidence type="ECO:0000303" key="24">
    <source>
    </source>
</evidence>
<evidence type="ECO:0000305" key="25"/>
<evidence type="ECO:0000305" key="26">
    <source>
    </source>
</evidence>
<evidence type="ECO:0007744" key="27">
    <source>
    </source>
</evidence>
<evidence type="ECO:0007744" key="28">
    <source>
    </source>
</evidence>
<evidence type="ECO:0007744" key="29">
    <source>
    </source>
</evidence>
<evidence type="ECO:0007744" key="30">
    <source>
    </source>
</evidence>
<evidence type="ECO:0007744" key="31">
    <source>
    </source>
</evidence>
<evidence type="ECO:0007744" key="32">
    <source>
    </source>
</evidence>
<evidence type="ECO:0007829" key="33">
    <source>
        <dbReference type="PDB" id="2COA"/>
    </source>
</evidence>
<gene>
    <name type="primary">PRKD2</name>
    <name type="synonym">PKD2</name>
    <name type="ORF">HSPC187</name>
</gene>
<organism>
    <name type="scientific">Homo sapiens</name>
    <name type="common">Human</name>
    <dbReference type="NCBI Taxonomy" id="9606"/>
    <lineage>
        <taxon>Eukaryota</taxon>
        <taxon>Metazoa</taxon>
        <taxon>Chordata</taxon>
        <taxon>Craniata</taxon>
        <taxon>Vertebrata</taxon>
        <taxon>Euteleostomi</taxon>
        <taxon>Mammalia</taxon>
        <taxon>Eutheria</taxon>
        <taxon>Euarchontoglires</taxon>
        <taxon>Primates</taxon>
        <taxon>Haplorrhini</taxon>
        <taxon>Catarrhini</taxon>
        <taxon>Hominidae</taxon>
        <taxon>Homo</taxon>
    </lineage>
</organism>
<dbReference type="EC" id="2.7.11.13" evidence="9 10 17 23"/>
<dbReference type="EMBL" id="AF309082">
    <property type="protein sequence ID" value="AAK01149.1"/>
    <property type="molecule type" value="mRNA"/>
</dbReference>
<dbReference type="EMBL" id="AK074673">
    <property type="protein sequence ID" value="BAC11127.1"/>
    <property type="molecule type" value="mRNA"/>
</dbReference>
<dbReference type="EMBL" id="AK095884">
    <property type="protein sequence ID" value="BAG53158.1"/>
    <property type="molecule type" value="mRNA"/>
</dbReference>
<dbReference type="EMBL" id="AK300339">
    <property type="protein sequence ID" value="BAG62084.1"/>
    <property type="molecule type" value="mRNA"/>
</dbReference>
<dbReference type="EMBL" id="AC008635">
    <property type="status" value="NOT_ANNOTATED_CDS"/>
    <property type="molecule type" value="Genomic_DNA"/>
</dbReference>
<dbReference type="EMBL" id="AC093503">
    <property type="status" value="NOT_ANNOTATED_CDS"/>
    <property type="molecule type" value="Genomic_DNA"/>
</dbReference>
<dbReference type="EMBL" id="KC877745">
    <property type="status" value="NOT_ANNOTATED_CDS"/>
    <property type="molecule type" value="Genomic_DNA"/>
</dbReference>
<dbReference type="EMBL" id="AL050147">
    <property type="protein sequence ID" value="CAB43292.1"/>
    <property type="molecule type" value="mRNA"/>
</dbReference>
<dbReference type="EMBL" id="AF151021">
    <property type="protein sequence ID" value="AAF36107.1"/>
    <property type="status" value="ALT_FRAME"/>
    <property type="molecule type" value="mRNA"/>
</dbReference>
<dbReference type="CCDS" id="CCDS12689.1">
    <molecule id="Q9BZL6-1"/>
</dbReference>
<dbReference type="CCDS" id="CCDS59401.1">
    <molecule id="Q9BZL6-2"/>
</dbReference>
<dbReference type="PIR" id="T08777">
    <property type="entry name" value="T08777"/>
</dbReference>
<dbReference type="RefSeq" id="NP_001073349.1">
    <molecule id="Q9BZL6-1"/>
    <property type="nucleotide sequence ID" value="NM_001079880.2"/>
</dbReference>
<dbReference type="RefSeq" id="NP_001073350.1">
    <molecule id="Q9BZL6-1"/>
    <property type="nucleotide sequence ID" value="NM_001079881.2"/>
</dbReference>
<dbReference type="RefSeq" id="NP_001073351.1">
    <molecule id="Q9BZL6-2"/>
    <property type="nucleotide sequence ID" value="NM_001079882.2"/>
</dbReference>
<dbReference type="RefSeq" id="NP_057541.2">
    <molecule id="Q9BZL6-1"/>
    <property type="nucleotide sequence ID" value="NM_016457.4"/>
</dbReference>
<dbReference type="RefSeq" id="XP_005258773.2">
    <molecule id="Q9BZL6-2"/>
    <property type="nucleotide sequence ID" value="XM_005258716.3"/>
</dbReference>
<dbReference type="RefSeq" id="XP_047294523.1">
    <molecule id="Q9BZL6-2"/>
    <property type="nucleotide sequence ID" value="XM_047438567.1"/>
</dbReference>
<dbReference type="RefSeq" id="XP_047294524.1">
    <molecule id="Q9BZL6-2"/>
    <property type="nucleotide sequence ID" value="XM_047438568.1"/>
</dbReference>
<dbReference type="RefSeq" id="XP_054176459.1">
    <molecule id="Q9BZL6-1"/>
    <property type="nucleotide sequence ID" value="XM_054320484.1"/>
</dbReference>
<dbReference type="RefSeq" id="XP_054176460.1">
    <molecule id="Q9BZL6-1"/>
    <property type="nucleotide sequence ID" value="XM_054320485.1"/>
</dbReference>
<dbReference type="RefSeq" id="XP_054176461.1">
    <molecule id="Q9BZL6-2"/>
    <property type="nucleotide sequence ID" value="XM_054320486.1"/>
</dbReference>
<dbReference type="RefSeq" id="XP_054176462.1">
    <molecule id="Q9BZL6-2"/>
    <property type="nucleotide sequence ID" value="XM_054320487.1"/>
</dbReference>
<dbReference type="RefSeq" id="XP_054176463.1">
    <molecule id="Q9BZL6-2"/>
    <property type="nucleotide sequence ID" value="XM_054320488.1"/>
</dbReference>
<dbReference type="PDB" id="2COA">
    <property type="method" value="NMR"/>
    <property type="chains" value="A=398-509"/>
</dbReference>
<dbReference type="PDB" id="3BGM">
    <property type="method" value="X-ray"/>
    <property type="resolution" value="1.60 A"/>
    <property type="chains" value="C=526-534"/>
</dbReference>
<dbReference type="PDB" id="4NNX">
    <property type="method" value="X-ray"/>
    <property type="resolution" value="2.10 A"/>
    <property type="chains" value="C=526-534"/>
</dbReference>
<dbReference type="PDB" id="4NNY">
    <property type="method" value="X-ray"/>
    <property type="resolution" value="1.90 A"/>
    <property type="chains" value="C=526-534"/>
</dbReference>
<dbReference type="PDBsum" id="2COA"/>
<dbReference type="PDBsum" id="3BGM"/>
<dbReference type="PDBsum" id="4NNX"/>
<dbReference type="PDBsum" id="4NNY"/>
<dbReference type="BMRB" id="Q9BZL6"/>
<dbReference type="SMR" id="Q9BZL6"/>
<dbReference type="BioGRID" id="117384">
    <property type="interactions" value="315"/>
</dbReference>
<dbReference type="FunCoup" id="Q9BZL6">
    <property type="interactions" value="2691"/>
</dbReference>
<dbReference type="IntAct" id="Q9BZL6">
    <property type="interactions" value="126"/>
</dbReference>
<dbReference type="MINT" id="Q9BZL6"/>
<dbReference type="STRING" id="9606.ENSP00000393978"/>
<dbReference type="BindingDB" id="Q9BZL6"/>
<dbReference type="ChEMBL" id="CHEMBL4900"/>
<dbReference type="DrugCentral" id="Q9BZL6"/>
<dbReference type="GuidetoPHARMACOLOGY" id="2173"/>
<dbReference type="GlyGen" id="Q9BZL6">
    <property type="glycosylation" value="3 sites, 1 O-linked glycan (2 sites)"/>
</dbReference>
<dbReference type="iPTMnet" id="Q9BZL6"/>
<dbReference type="PhosphoSitePlus" id="Q9BZL6"/>
<dbReference type="BioMuta" id="PRKD2"/>
<dbReference type="DMDM" id="296434570"/>
<dbReference type="CPTAC" id="CPTAC-1364"/>
<dbReference type="jPOST" id="Q9BZL6"/>
<dbReference type="MassIVE" id="Q9BZL6"/>
<dbReference type="PaxDb" id="9606-ENSP00000393978"/>
<dbReference type="PeptideAtlas" id="Q9BZL6"/>
<dbReference type="ProteomicsDB" id="79872">
    <molecule id="Q9BZL6-1"/>
</dbReference>
<dbReference type="Pumba" id="Q9BZL6"/>
<dbReference type="Antibodypedia" id="18122">
    <property type="antibodies" value="618 antibodies from 41 providers"/>
</dbReference>
<dbReference type="DNASU" id="25865"/>
<dbReference type="Ensembl" id="ENST00000291281.9">
    <molecule id="Q9BZL6-1"/>
    <property type="protein sequence ID" value="ENSP00000291281.3"/>
    <property type="gene ID" value="ENSG00000105287.13"/>
</dbReference>
<dbReference type="Ensembl" id="ENST00000433867.5">
    <molecule id="Q9BZL6-1"/>
    <property type="protein sequence ID" value="ENSP00000393978.1"/>
    <property type="gene ID" value="ENSG00000105287.13"/>
</dbReference>
<dbReference type="Ensembl" id="ENST00000595515.5">
    <molecule id="Q9BZL6-3"/>
    <property type="protein sequence ID" value="ENSP00000470804.1"/>
    <property type="gene ID" value="ENSG00000105287.13"/>
</dbReference>
<dbReference type="Ensembl" id="ENST00000600194.5">
    <molecule id="Q9BZL6-2"/>
    <property type="protein sequence ID" value="ENSP00000472744.1"/>
    <property type="gene ID" value="ENSG00000105287.13"/>
</dbReference>
<dbReference type="Ensembl" id="ENST00000601806.5">
    <molecule id="Q9BZL6-2"/>
    <property type="protein sequence ID" value="ENSP00000469106.1"/>
    <property type="gene ID" value="ENSG00000105287.13"/>
</dbReference>
<dbReference type="GeneID" id="25865"/>
<dbReference type="KEGG" id="hsa:25865"/>
<dbReference type="MANE-Select" id="ENST00000291281.9">
    <property type="protein sequence ID" value="ENSP00000291281.3"/>
    <property type="RefSeq nucleotide sequence ID" value="NM_016457.5"/>
    <property type="RefSeq protein sequence ID" value="NP_057541.2"/>
</dbReference>
<dbReference type="UCSC" id="uc002pfi.4">
    <molecule id="Q9BZL6-1"/>
    <property type="organism name" value="human"/>
</dbReference>
<dbReference type="UCSC" id="uc010xye.3">
    <property type="organism name" value="human"/>
</dbReference>
<dbReference type="AGR" id="HGNC:17293"/>
<dbReference type="CTD" id="25865"/>
<dbReference type="DisGeNET" id="25865"/>
<dbReference type="GeneCards" id="PRKD2"/>
<dbReference type="HGNC" id="HGNC:17293">
    <property type="gene designation" value="PRKD2"/>
</dbReference>
<dbReference type="HPA" id="ENSG00000105287">
    <property type="expression patterns" value="Low tissue specificity"/>
</dbReference>
<dbReference type="MIM" id="607074">
    <property type="type" value="gene"/>
</dbReference>
<dbReference type="neXtProt" id="NX_Q9BZL6"/>
<dbReference type="OpenTargets" id="ENSG00000105287"/>
<dbReference type="PharmGKB" id="PA134903505"/>
<dbReference type="VEuPathDB" id="HostDB:ENSG00000105287"/>
<dbReference type="eggNOG" id="KOG4236">
    <property type="taxonomic scope" value="Eukaryota"/>
</dbReference>
<dbReference type="GeneTree" id="ENSGT00950000183024"/>
<dbReference type="HOGENOM" id="CLU_009772_1_0_1"/>
<dbReference type="InParanoid" id="Q9BZL6"/>
<dbReference type="OMA" id="ASYMGRP"/>
<dbReference type="OrthoDB" id="74314at2759"/>
<dbReference type="PAN-GO" id="Q9BZL6">
    <property type="GO annotations" value="1 GO annotation based on evolutionary models"/>
</dbReference>
<dbReference type="PhylomeDB" id="Q9BZL6"/>
<dbReference type="TreeFam" id="TF314320"/>
<dbReference type="BRENDA" id="2.7.11.13">
    <property type="organism ID" value="2681"/>
</dbReference>
<dbReference type="PathwayCommons" id="Q9BZL6"/>
<dbReference type="Reactome" id="R-HSA-1660661">
    <property type="pathway name" value="Sphingolipid de novo biosynthesis"/>
</dbReference>
<dbReference type="SignaLink" id="Q9BZL6"/>
<dbReference type="SIGNOR" id="Q9BZL6"/>
<dbReference type="BioGRID-ORCS" id="25865">
    <property type="hits" value="31 hits in 1202 CRISPR screens"/>
</dbReference>
<dbReference type="CD-CODE" id="8C2F96ED">
    <property type="entry name" value="Centrosome"/>
</dbReference>
<dbReference type="ChiTaRS" id="PRKD2">
    <property type="organism name" value="human"/>
</dbReference>
<dbReference type="EvolutionaryTrace" id="Q9BZL6"/>
<dbReference type="GeneWiki" id="PRKD2"/>
<dbReference type="GenomeRNAi" id="25865"/>
<dbReference type="Pharos" id="Q9BZL6">
    <property type="development level" value="Tchem"/>
</dbReference>
<dbReference type="PRO" id="PR:Q9BZL6"/>
<dbReference type="Proteomes" id="UP000005640">
    <property type="component" value="Chromosome 19"/>
</dbReference>
<dbReference type="RNAct" id="Q9BZL6">
    <property type="molecule type" value="protein"/>
</dbReference>
<dbReference type="Bgee" id="ENSG00000105287">
    <property type="expression patterns" value="Expressed in vena cava and 201 other cell types or tissues"/>
</dbReference>
<dbReference type="ExpressionAtlas" id="Q9BZL6">
    <property type="expression patterns" value="baseline and differential"/>
</dbReference>
<dbReference type="GO" id="GO:0005737">
    <property type="term" value="C:cytoplasm"/>
    <property type="evidence" value="ECO:0000314"/>
    <property type="project" value="BHF-UCL"/>
</dbReference>
<dbReference type="GO" id="GO:0005829">
    <property type="term" value="C:cytosol"/>
    <property type="evidence" value="ECO:0000314"/>
    <property type="project" value="HPA"/>
</dbReference>
<dbReference type="GO" id="GO:0005794">
    <property type="term" value="C:Golgi apparatus"/>
    <property type="evidence" value="ECO:0007669"/>
    <property type="project" value="UniProtKB-SubCell"/>
</dbReference>
<dbReference type="GO" id="GO:0005654">
    <property type="term" value="C:nucleoplasm"/>
    <property type="evidence" value="ECO:0000314"/>
    <property type="project" value="HPA"/>
</dbReference>
<dbReference type="GO" id="GO:0005634">
    <property type="term" value="C:nucleus"/>
    <property type="evidence" value="ECO:0000314"/>
    <property type="project" value="BHF-UCL"/>
</dbReference>
<dbReference type="GO" id="GO:0005886">
    <property type="term" value="C:plasma membrane"/>
    <property type="evidence" value="ECO:0007669"/>
    <property type="project" value="UniProtKB-SubCell"/>
</dbReference>
<dbReference type="GO" id="GO:0005524">
    <property type="term" value="F:ATP binding"/>
    <property type="evidence" value="ECO:0007669"/>
    <property type="project" value="UniProtKB-KW"/>
</dbReference>
<dbReference type="GO" id="GO:0004697">
    <property type="term" value="F:diacylglycerol-dependent serine/threonine kinase activity"/>
    <property type="evidence" value="ECO:0000304"/>
    <property type="project" value="Reactome"/>
</dbReference>
<dbReference type="GO" id="GO:0004672">
    <property type="term" value="F:protein kinase activity"/>
    <property type="evidence" value="ECO:0000314"/>
    <property type="project" value="BHF-UCL"/>
</dbReference>
<dbReference type="GO" id="GO:0005080">
    <property type="term" value="F:protein kinase C binding"/>
    <property type="evidence" value="ECO:0000353"/>
    <property type="project" value="UniProtKB"/>
</dbReference>
<dbReference type="GO" id="GO:0106310">
    <property type="term" value="F:protein serine kinase activity"/>
    <property type="evidence" value="ECO:0000316"/>
    <property type="project" value="BHF-UCL"/>
</dbReference>
<dbReference type="GO" id="GO:0004674">
    <property type="term" value="F:protein serine/threonine kinase activity"/>
    <property type="evidence" value="ECO:0000314"/>
    <property type="project" value="BHF-UCL"/>
</dbReference>
<dbReference type="GO" id="GO:0008270">
    <property type="term" value="F:zinc ion binding"/>
    <property type="evidence" value="ECO:0007669"/>
    <property type="project" value="UniProtKB-KW"/>
</dbReference>
<dbReference type="GO" id="GO:0002250">
    <property type="term" value="P:adaptive immune response"/>
    <property type="evidence" value="ECO:0007669"/>
    <property type="project" value="UniProtKB-KW"/>
</dbReference>
<dbReference type="GO" id="GO:0001525">
    <property type="term" value="P:angiogenesis"/>
    <property type="evidence" value="ECO:0007669"/>
    <property type="project" value="UniProtKB-KW"/>
</dbReference>
<dbReference type="GO" id="GO:0007155">
    <property type="term" value="P:cell adhesion"/>
    <property type="evidence" value="ECO:0007669"/>
    <property type="project" value="UniProtKB-KW"/>
</dbReference>
<dbReference type="GO" id="GO:0035924">
    <property type="term" value="P:cellular response to vascular endothelial growth factor stimulus"/>
    <property type="evidence" value="ECO:0000315"/>
    <property type="project" value="BHF-UCL"/>
</dbReference>
<dbReference type="GO" id="GO:0061154">
    <property type="term" value="P:endothelial tube morphogenesis"/>
    <property type="evidence" value="ECO:0000304"/>
    <property type="project" value="BHF-UCL"/>
</dbReference>
<dbReference type="GO" id="GO:0035556">
    <property type="term" value="P:intracellular signal transduction"/>
    <property type="evidence" value="ECO:0000315"/>
    <property type="project" value="BHF-UCL"/>
</dbReference>
<dbReference type="GO" id="GO:0018105">
    <property type="term" value="P:peptidyl-serine phosphorylation"/>
    <property type="evidence" value="ECO:0000315"/>
    <property type="project" value="UniProtKB"/>
</dbReference>
<dbReference type="GO" id="GO:0018107">
    <property type="term" value="P:peptidyl-threonine phosphorylation"/>
    <property type="evidence" value="ECO:0000315"/>
    <property type="project" value="UniProtKB"/>
</dbReference>
<dbReference type="GO" id="GO:0007200">
    <property type="term" value="P:phospholipase C-activating G protein-coupled receptor signaling pathway"/>
    <property type="evidence" value="ECO:0000318"/>
    <property type="project" value="GO_Central"/>
</dbReference>
<dbReference type="GO" id="GO:0045766">
    <property type="term" value="P:positive regulation of angiogenesis"/>
    <property type="evidence" value="ECO:0000315"/>
    <property type="project" value="UniProtKB"/>
</dbReference>
<dbReference type="GO" id="GO:0043536">
    <property type="term" value="P:positive regulation of blood vessel endothelial cell migration"/>
    <property type="evidence" value="ECO:0000315"/>
    <property type="project" value="BHF-UCL"/>
</dbReference>
<dbReference type="GO" id="GO:0045785">
    <property type="term" value="P:positive regulation of cell adhesion"/>
    <property type="evidence" value="ECO:0000315"/>
    <property type="project" value="UniProtKB"/>
</dbReference>
<dbReference type="GO" id="GO:2000573">
    <property type="term" value="P:positive regulation of DNA biosynthetic process"/>
    <property type="evidence" value="ECO:0000250"/>
    <property type="project" value="UniProtKB"/>
</dbReference>
<dbReference type="GO" id="GO:0051091">
    <property type="term" value="P:positive regulation of DNA-binding transcription factor activity"/>
    <property type="evidence" value="ECO:0000315"/>
    <property type="project" value="UniProtKB"/>
</dbReference>
<dbReference type="GO" id="GO:2001028">
    <property type="term" value="P:positive regulation of endothelial cell chemotaxis"/>
    <property type="evidence" value="ECO:0000315"/>
    <property type="project" value="BHF-UCL"/>
</dbReference>
<dbReference type="GO" id="GO:0010595">
    <property type="term" value="P:positive regulation of endothelial cell migration"/>
    <property type="evidence" value="ECO:0000315"/>
    <property type="project" value="UniProtKB"/>
</dbReference>
<dbReference type="GO" id="GO:0001938">
    <property type="term" value="P:positive regulation of endothelial cell proliferation"/>
    <property type="evidence" value="ECO:0000315"/>
    <property type="project" value="UniProtKB"/>
</dbReference>
<dbReference type="GO" id="GO:0070374">
    <property type="term" value="P:positive regulation of ERK1 and ERK2 cascade"/>
    <property type="evidence" value="ECO:0000250"/>
    <property type="project" value="UniProtKB"/>
</dbReference>
<dbReference type="GO" id="GO:0045743">
    <property type="term" value="P:positive regulation of fibroblast growth factor receptor signaling pathway"/>
    <property type="evidence" value="ECO:0000315"/>
    <property type="project" value="UniProtKB"/>
</dbReference>
<dbReference type="GO" id="GO:0032743">
    <property type="term" value="P:positive regulation of interleukin-2 production"/>
    <property type="evidence" value="ECO:0000250"/>
    <property type="project" value="UniProtKB"/>
</dbReference>
<dbReference type="GO" id="GO:0032757">
    <property type="term" value="P:positive regulation of interleukin-8 production"/>
    <property type="evidence" value="ECO:0000315"/>
    <property type="project" value="UniProtKB"/>
</dbReference>
<dbReference type="GO" id="GO:0051092">
    <property type="term" value="P:positive regulation of NF-kappaB transcription factor activity"/>
    <property type="evidence" value="ECO:0000315"/>
    <property type="project" value="UniProtKB"/>
</dbReference>
<dbReference type="GO" id="GO:0050862">
    <property type="term" value="P:positive regulation of T cell receptor signaling pathway"/>
    <property type="evidence" value="ECO:0000250"/>
    <property type="project" value="UniProtKB"/>
</dbReference>
<dbReference type="GO" id="GO:0045944">
    <property type="term" value="P:positive regulation of transcription by RNA polymerase II"/>
    <property type="evidence" value="ECO:0000314"/>
    <property type="project" value="BHF-UCL"/>
</dbReference>
<dbReference type="GO" id="GO:0030949">
    <property type="term" value="P:positive regulation of vascular endothelial growth factor receptor signaling pathway"/>
    <property type="evidence" value="ECO:0000315"/>
    <property type="project" value="UniProtKB"/>
</dbReference>
<dbReference type="GO" id="GO:0006468">
    <property type="term" value="P:protein phosphorylation"/>
    <property type="evidence" value="ECO:0000314"/>
    <property type="project" value="CACAO"/>
</dbReference>
<dbReference type="GO" id="GO:0070232">
    <property type="term" value="P:regulation of T cell apoptotic process"/>
    <property type="evidence" value="ECO:0000315"/>
    <property type="project" value="BHF-UCL"/>
</dbReference>
<dbReference type="GO" id="GO:0030148">
    <property type="term" value="P:sphingolipid biosynthetic process"/>
    <property type="evidence" value="ECO:0000304"/>
    <property type="project" value="Reactome"/>
</dbReference>
<dbReference type="GO" id="GO:0050852">
    <property type="term" value="P:T cell receptor signaling pathway"/>
    <property type="evidence" value="ECO:0000314"/>
    <property type="project" value="BHF-UCL"/>
</dbReference>
<dbReference type="GO" id="GO:0048010">
    <property type="term" value="P:vascular endothelial growth factor receptor signaling pathway"/>
    <property type="evidence" value="ECO:0000315"/>
    <property type="project" value="BHF-UCL"/>
</dbReference>
<dbReference type="CDD" id="cd20840">
    <property type="entry name" value="C1_PKD2_rpt1"/>
    <property type="match status" value="1"/>
</dbReference>
<dbReference type="CDD" id="cd20843">
    <property type="entry name" value="C1_PKD2_rpt2"/>
    <property type="match status" value="1"/>
</dbReference>
<dbReference type="CDD" id="cd01239">
    <property type="entry name" value="PH_PKD"/>
    <property type="match status" value="1"/>
</dbReference>
<dbReference type="CDD" id="cd14082">
    <property type="entry name" value="STKc_PKD"/>
    <property type="match status" value="1"/>
</dbReference>
<dbReference type="FunFam" id="1.10.510.10:FF:000151">
    <property type="entry name" value="Serine/threonine-protein kinase"/>
    <property type="match status" value="1"/>
</dbReference>
<dbReference type="FunFam" id="2.30.29.30:FF:000056">
    <property type="entry name" value="Serine/threonine-protein kinase"/>
    <property type="match status" value="1"/>
</dbReference>
<dbReference type="FunFam" id="3.30.200.20:FF:000137">
    <property type="entry name" value="Serine/threonine-protein kinase"/>
    <property type="match status" value="1"/>
</dbReference>
<dbReference type="FunFam" id="3.30.60.20:FF:000007">
    <property type="entry name" value="Serine/threonine-protein kinase"/>
    <property type="match status" value="1"/>
</dbReference>
<dbReference type="FunFam" id="3.30.60.20:FF:000019">
    <property type="entry name" value="Serine/threonine-protein kinase"/>
    <property type="match status" value="1"/>
</dbReference>
<dbReference type="Gene3D" id="3.30.60.20">
    <property type="match status" value="2"/>
</dbReference>
<dbReference type="Gene3D" id="2.30.29.30">
    <property type="entry name" value="Pleckstrin-homology domain (PH domain)/Phosphotyrosine-binding domain (PTB)"/>
    <property type="match status" value="1"/>
</dbReference>
<dbReference type="Gene3D" id="1.10.510.10">
    <property type="entry name" value="Transferase(Phosphotransferase) domain 1"/>
    <property type="match status" value="1"/>
</dbReference>
<dbReference type="InterPro" id="IPR046349">
    <property type="entry name" value="C1-like_sf"/>
</dbReference>
<dbReference type="InterPro" id="IPR020454">
    <property type="entry name" value="DAG/PE-bd"/>
</dbReference>
<dbReference type="InterPro" id="IPR011009">
    <property type="entry name" value="Kinase-like_dom_sf"/>
</dbReference>
<dbReference type="InterPro" id="IPR002219">
    <property type="entry name" value="PE/DAG-bd"/>
</dbReference>
<dbReference type="InterPro" id="IPR011993">
    <property type="entry name" value="PH-like_dom_sf"/>
</dbReference>
<dbReference type="InterPro" id="IPR001849">
    <property type="entry name" value="PH_domain"/>
</dbReference>
<dbReference type="InterPro" id="IPR000719">
    <property type="entry name" value="Prot_kinase_dom"/>
</dbReference>
<dbReference type="InterPro" id="IPR017441">
    <property type="entry name" value="Protein_kinase_ATP_BS"/>
</dbReference>
<dbReference type="InterPro" id="IPR015727">
    <property type="entry name" value="Protein_Kinase_C_mu-related"/>
</dbReference>
<dbReference type="InterPro" id="IPR008271">
    <property type="entry name" value="Ser/Thr_kinase_AS"/>
</dbReference>
<dbReference type="PANTHER" id="PTHR22968">
    <property type="entry name" value="PROTEIN KINASE C, MU"/>
    <property type="match status" value="1"/>
</dbReference>
<dbReference type="PANTHER" id="PTHR22968:SF12">
    <property type="entry name" value="SERINE_THREONINE-PROTEIN KINASE D2"/>
    <property type="match status" value="1"/>
</dbReference>
<dbReference type="Pfam" id="PF00130">
    <property type="entry name" value="C1_1"/>
    <property type="match status" value="2"/>
</dbReference>
<dbReference type="Pfam" id="PF00169">
    <property type="entry name" value="PH"/>
    <property type="match status" value="1"/>
</dbReference>
<dbReference type="Pfam" id="PF00069">
    <property type="entry name" value="Pkinase"/>
    <property type="match status" value="1"/>
</dbReference>
<dbReference type="PIRSF" id="PIRSF000552">
    <property type="entry name" value="PKC_mu_nu_D2"/>
    <property type="match status" value="1"/>
</dbReference>
<dbReference type="PRINTS" id="PR00008">
    <property type="entry name" value="DAGPEDOMAIN"/>
</dbReference>
<dbReference type="SMART" id="SM00109">
    <property type="entry name" value="C1"/>
    <property type="match status" value="2"/>
</dbReference>
<dbReference type="SMART" id="SM00233">
    <property type="entry name" value="PH"/>
    <property type="match status" value="1"/>
</dbReference>
<dbReference type="SMART" id="SM00220">
    <property type="entry name" value="S_TKc"/>
    <property type="match status" value="1"/>
</dbReference>
<dbReference type="SUPFAM" id="SSF57889">
    <property type="entry name" value="Cysteine-rich domain"/>
    <property type="match status" value="2"/>
</dbReference>
<dbReference type="SUPFAM" id="SSF50729">
    <property type="entry name" value="PH domain-like"/>
    <property type="match status" value="1"/>
</dbReference>
<dbReference type="SUPFAM" id="SSF56112">
    <property type="entry name" value="Protein kinase-like (PK-like)"/>
    <property type="match status" value="1"/>
</dbReference>
<dbReference type="PROSITE" id="PS50003">
    <property type="entry name" value="PH_DOMAIN"/>
    <property type="match status" value="1"/>
</dbReference>
<dbReference type="PROSITE" id="PS00107">
    <property type="entry name" value="PROTEIN_KINASE_ATP"/>
    <property type="match status" value="1"/>
</dbReference>
<dbReference type="PROSITE" id="PS50011">
    <property type="entry name" value="PROTEIN_KINASE_DOM"/>
    <property type="match status" value="1"/>
</dbReference>
<dbReference type="PROSITE" id="PS00108">
    <property type="entry name" value="PROTEIN_KINASE_ST"/>
    <property type="match status" value="1"/>
</dbReference>
<dbReference type="PROSITE" id="PS00479">
    <property type="entry name" value="ZF_DAG_PE_1"/>
    <property type="match status" value="2"/>
</dbReference>
<dbReference type="PROSITE" id="PS50081">
    <property type="entry name" value="ZF_DAG_PE_2"/>
    <property type="match status" value="2"/>
</dbReference>